<organism>
    <name type="scientific">Mesocricetus auratus</name>
    <name type="common">Golden hamster</name>
    <dbReference type="NCBI Taxonomy" id="10036"/>
    <lineage>
        <taxon>Eukaryota</taxon>
        <taxon>Metazoa</taxon>
        <taxon>Chordata</taxon>
        <taxon>Craniata</taxon>
        <taxon>Vertebrata</taxon>
        <taxon>Euteleostomi</taxon>
        <taxon>Mammalia</taxon>
        <taxon>Eutheria</taxon>
        <taxon>Euarchontoglires</taxon>
        <taxon>Glires</taxon>
        <taxon>Rodentia</taxon>
        <taxon>Myomorpha</taxon>
        <taxon>Muroidea</taxon>
        <taxon>Cricetidae</taxon>
        <taxon>Cricetinae</taxon>
        <taxon>Mesocricetus</taxon>
    </lineage>
</organism>
<comment type="function">
    <text evidence="3">Major acute phase protein.</text>
</comment>
<comment type="subunit">
    <text evidence="1">Homohexamer; dimer of trimers. Can form amyloid fibrils after partial proteolysis; the native, undenatured protein does not form amyloid fibrils (in vitro). Apolipoprotein of the HDL complex. Binds to heparin (By similarity).</text>
</comment>
<comment type="subcellular location">
    <subcellularLocation>
        <location evidence="1">Secreted</location>
    </subcellularLocation>
</comment>
<comment type="tissue specificity">
    <text evidence="3">Detected in liver, spleen and kidney.</text>
</comment>
<comment type="induction">
    <text evidence="3">Up-regulated by inflammatory stimuli.</text>
</comment>
<comment type="disease">
    <text>Reactive, secondary amyloidosis is characterized by the extracellular accumulation in various tissues of the SAA protein. These deposits are highly insoluble and resistant to proteolysis; they disrupt tissue structure and compromise function.</text>
</comment>
<comment type="similarity">
    <text evidence="4">Belongs to the SAA family.</text>
</comment>
<sequence length="122" mass="14021">MKPFVAIIFCFLILGVDSQRWFQFMKEAGQGTRDMWRAYTDMREANWKNSDKYFHARGNYDAAQRGPGGAWAAKVISDAREGFKRITGRGIEDSRADQFANEWGRSGKDPNFFRPPGLPSKY</sequence>
<accession>P20726</accession>
<evidence type="ECO:0000250" key="1"/>
<evidence type="ECO:0000256" key="2">
    <source>
        <dbReference type="SAM" id="MobiDB-lite"/>
    </source>
</evidence>
<evidence type="ECO:0000269" key="3">
    <source>
    </source>
</evidence>
<evidence type="ECO:0000305" key="4"/>
<name>SAA1_MESAU</name>
<dbReference type="EMBL" id="M27242">
    <property type="protein sequence ID" value="AAA37095.1"/>
    <property type="molecule type" value="mRNA"/>
</dbReference>
<dbReference type="PIR" id="B30248">
    <property type="entry name" value="B30248"/>
</dbReference>
<dbReference type="SMR" id="P20726"/>
<dbReference type="Proteomes" id="UP000189706">
    <property type="component" value="Unplaced"/>
</dbReference>
<dbReference type="GO" id="GO:0034364">
    <property type="term" value="C:high-density lipoprotein particle"/>
    <property type="evidence" value="ECO:0007669"/>
    <property type="project" value="UniProtKB-KW"/>
</dbReference>
<dbReference type="GO" id="GO:0008201">
    <property type="term" value="F:heparin binding"/>
    <property type="evidence" value="ECO:0007669"/>
    <property type="project" value="UniProtKB-KW"/>
</dbReference>
<dbReference type="GO" id="GO:0006953">
    <property type="term" value="P:acute-phase response"/>
    <property type="evidence" value="ECO:0007669"/>
    <property type="project" value="UniProtKB-KW"/>
</dbReference>
<dbReference type="FunFam" id="1.10.132.110:FF:000001">
    <property type="entry name" value="Serum amyloid A protein"/>
    <property type="match status" value="1"/>
</dbReference>
<dbReference type="Gene3D" id="1.10.132.110">
    <property type="entry name" value="Serum amyloid A protein"/>
    <property type="match status" value="1"/>
</dbReference>
<dbReference type="InterPro" id="IPR000096">
    <property type="entry name" value="Serum_amyloid_A"/>
</dbReference>
<dbReference type="InterPro" id="IPR052464">
    <property type="entry name" value="Synovial_Prolif_Regulator"/>
</dbReference>
<dbReference type="PANTHER" id="PTHR23424">
    <property type="entry name" value="SERUM AMYLOID A"/>
    <property type="match status" value="1"/>
</dbReference>
<dbReference type="PANTHER" id="PTHR23424:SF29">
    <property type="entry name" value="SERUM AMYLOID A PROTEIN"/>
    <property type="match status" value="1"/>
</dbReference>
<dbReference type="Pfam" id="PF00277">
    <property type="entry name" value="SAA"/>
    <property type="match status" value="1"/>
</dbReference>
<dbReference type="PIRSF" id="PIRSF002472">
    <property type="entry name" value="Serum_amyloid_A"/>
    <property type="match status" value="1"/>
</dbReference>
<dbReference type="PRINTS" id="PR00306">
    <property type="entry name" value="SERUMAMYLOID"/>
</dbReference>
<dbReference type="SMART" id="SM00197">
    <property type="entry name" value="SAA"/>
    <property type="match status" value="1"/>
</dbReference>
<dbReference type="PROSITE" id="PS00992">
    <property type="entry name" value="SAA"/>
    <property type="match status" value="1"/>
</dbReference>
<proteinExistence type="evidence at transcript level"/>
<protein>
    <recommendedName>
        <fullName>Serum amyloid A-1 protein</fullName>
    </recommendedName>
</protein>
<keyword id="KW-0011">Acute phase</keyword>
<keyword id="KW-0034">Amyloid</keyword>
<keyword id="KW-0345">HDL</keyword>
<keyword id="KW-0358">Heparin-binding</keyword>
<keyword id="KW-1185">Reference proteome</keyword>
<keyword id="KW-0964">Secreted</keyword>
<keyword id="KW-0732">Signal</keyword>
<gene>
    <name type="primary">SAA1</name>
</gene>
<reference key="1">
    <citation type="journal article" date="1989" name="Biochemistry">
        <title>Expression and sequence analyses of serum amyloid A in the Syrian hamster.</title>
        <authorList>
            <person name="Webb C.F."/>
            <person name="Tucker P.W."/>
            <person name="Dowton S.B."/>
        </authorList>
    </citation>
    <scope>NUCLEOTIDE SEQUENCE [MRNA]</scope>
    <scope>FUNCTION</scope>
    <scope>INDUCTION BY INFLAMMATORY STIMULI</scope>
    <scope>TISSUE SPECIFICITY</scope>
</reference>
<feature type="signal peptide" evidence="1">
    <location>
        <begin position="1"/>
        <end position="18"/>
    </location>
</feature>
<feature type="chain" id="PRO_0000031585" description="Serum amyloid A-1 protein">
    <location>
        <begin position="19"/>
        <end position="122"/>
    </location>
</feature>
<feature type="region of interest" description="Important for amyloid formation" evidence="1">
    <location>
        <begin position="19"/>
        <end position="45"/>
    </location>
</feature>
<feature type="region of interest" description="Disordered" evidence="2">
    <location>
        <begin position="100"/>
        <end position="122"/>
    </location>
</feature>